<reference key="1">
    <citation type="submission" date="2007-03" db="EMBL/GenBank/DDBJ databases">
        <authorList>
            <consortium name="NIH - Xenopus Gene Collection (XGC) project"/>
        </authorList>
    </citation>
    <scope>NUCLEOTIDE SEQUENCE [LARGE SCALE MRNA]</scope>
</reference>
<name>VATG3_XENTR</name>
<sequence length="118" mass="13813">MASQSQGIQQLLQAEKRAKDKLEEAKKRKNKRLRQAKEEATADIDQYRLKREGDFRRIQTSVMGSQGNLAVKIEEQTVEKIQLYSSSFHKYKEGVLQQLLDLAYNIKPELHTNFQYKL</sequence>
<gene>
    <name type="primary">atp6v1g3</name>
</gene>
<proteinExistence type="inferred from homology"/>
<comment type="function">
    <text evidence="1">Subunit of the V1 complex of vacuolar(H+)-ATPase (V-ATPase), a multisubunit enzyme composed of a peripheral complex (V1) that hydrolyzes ATP and a membrane integral complex (V0) that translocates protons. V-ATPase is responsible for acidifying and maintaining the pH of intracellular compartments and in some cell types, is targeted to the plasma membrane, where it is responsible for acidifying the extracellular environment.</text>
</comment>
<comment type="subunit">
    <text evidence="1">V-ATPase is a heteromultimeric enzyme made up of two complexes: the ATP-hydrolytic V1 complex and the proton translocation V0 complex. The V1 complex consists of three catalytic AB heterodimers that form a heterohexamer, three peripheral stalks each consisting of EG heterodimers, one central rotor including subunits D and F, and the regulatory subunits C and H. The proton translocation complex V0 consists of the proton transport subunit a, a ring of proteolipid subunits c9c'', rotary subunit d, subunits e and f, and two accessory subunits.</text>
</comment>
<comment type="similarity">
    <text evidence="4">Belongs to the V-ATPase G subunit family.</text>
</comment>
<keyword id="KW-0175">Coiled coil</keyword>
<keyword id="KW-0375">Hydrogen ion transport</keyword>
<keyword id="KW-0406">Ion transport</keyword>
<keyword id="KW-1185">Reference proteome</keyword>
<keyword id="KW-0813">Transport</keyword>
<evidence type="ECO:0000250" key="1">
    <source>
        <dbReference type="UniProtKB" id="O75348"/>
    </source>
</evidence>
<evidence type="ECO:0000255" key="2"/>
<evidence type="ECO:0000256" key="3">
    <source>
        <dbReference type="SAM" id="MobiDB-lite"/>
    </source>
</evidence>
<evidence type="ECO:0000305" key="4"/>
<organism>
    <name type="scientific">Xenopus tropicalis</name>
    <name type="common">Western clawed frog</name>
    <name type="synonym">Silurana tropicalis</name>
    <dbReference type="NCBI Taxonomy" id="8364"/>
    <lineage>
        <taxon>Eukaryota</taxon>
        <taxon>Metazoa</taxon>
        <taxon>Chordata</taxon>
        <taxon>Craniata</taxon>
        <taxon>Vertebrata</taxon>
        <taxon>Euteleostomi</taxon>
        <taxon>Amphibia</taxon>
        <taxon>Batrachia</taxon>
        <taxon>Anura</taxon>
        <taxon>Pipoidea</taxon>
        <taxon>Pipidae</taxon>
        <taxon>Xenopodinae</taxon>
        <taxon>Xenopus</taxon>
        <taxon>Silurana</taxon>
    </lineage>
</organism>
<accession>A4QNE9</accession>
<dbReference type="EMBL" id="BC135546">
    <property type="protein sequence ID" value="AAI35547.1"/>
    <property type="molecule type" value="mRNA"/>
</dbReference>
<dbReference type="RefSeq" id="NP_001096517.1">
    <property type="nucleotide sequence ID" value="NM_001103047.1"/>
</dbReference>
<dbReference type="SMR" id="A4QNE9"/>
<dbReference type="FunCoup" id="A4QNE9">
    <property type="interactions" value="871"/>
</dbReference>
<dbReference type="STRING" id="8364.ENSXETP00000005875"/>
<dbReference type="PaxDb" id="8364-ENSXETP00000021955"/>
<dbReference type="DNASU" id="100125150"/>
<dbReference type="GeneID" id="100125150"/>
<dbReference type="KEGG" id="xtr:100125150"/>
<dbReference type="AGR" id="Xenbase:XB-GENE-949366"/>
<dbReference type="CTD" id="127124"/>
<dbReference type="Xenbase" id="XB-GENE-949366">
    <property type="gene designation" value="atp6v1g3"/>
</dbReference>
<dbReference type="eggNOG" id="KOG1772">
    <property type="taxonomic scope" value="Eukaryota"/>
</dbReference>
<dbReference type="HOGENOM" id="CLU_125101_1_1_1"/>
<dbReference type="InParanoid" id="A4QNE9"/>
<dbReference type="OMA" id="SYHRNME"/>
<dbReference type="OrthoDB" id="250802at2759"/>
<dbReference type="PhylomeDB" id="A4QNE9"/>
<dbReference type="TreeFam" id="TF313777"/>
<dbReference type="Reactome" id="R-XTR-1222556">
    <property type="pathway name" value="ROS and RNS production in phagocytes"/>
</dbReference>
<dbReference type="Reactome" id="R-XTR-77387">
    <property type="pathway name" value="Insulin receptor recycling"/>
</dbReference>
<dbReference type="Reactome" id="R-XTR-917977">
    <property type="pathway name" value="Transferrin endocytosis and recycling"/>
</dbReference>
<dbReference type="Reactome" id="R-XTR-9639288">
    <property type="pathway name" value="Amino acids regulate mTORC1"/>
</dbReference>
<dbReference type="Reactome" id="R-XTR-983712">
    <property type="pathway name" value="Ion channel transport"/>
</dbReference>
<dbReference type="Proteomes" id="UP000008143">
    <property type="component" value="Chromosome 4"/>
</dbReference>
<dbReference type="Bgee" id="ENSXETG00000009966">
    <property type="expression patterns" value="Expressed in mesonephros and 6 other cell types or tissues"/>
</dbReference>
<dbReference type="GO" id="GO:0016471">
    <property type="term" value="C:vacuolar proton-transporting V-type ATPase complex"/>
    <property type="evidence" value="ECO:0007669"/>
    <property type="project" value="InterPro"/>
</dbReference>
<dbReference type="GO" id="GO:0046961">
    <property type="term" value="F:proton-transporting ATPase activity, rotational mechanism"/>
    <property type="evidence" value="ECO:0007669"/>
    <property type="project" value="InterPro"/>
</dbReference>
<dbReference type="FunFam" id="1.20.5.2950:FF:000001">
    <property type="entry name" value="V-type proton ATPase subunit G"/>
    <property type="match status" value="1"/>
</dbReference>
<dbReference type="Gene3D" id="1.20.5.2950">
    <property type="match status" value="1"/>
</dbReference>
<dbReference type="InterPro" id="IPR005124">
    <property type="entry name" value="V-ATPase_G"/>
</dbReference>
<dbReference type="NCBIfam" id="TIGR01147">
    <property type="entry name" value="V_ATP_synt_G"/>
    <property type="match status" value="1"/>
</dbReference>
<dbReference type="PANTHER" id="PTHR12713:SF5">
    <property type="entry name" value="V-TYPE PROTON ATPASE SUBUNIT G 3"/>
    <property type="match status" value="1"/>
</dbReference>
<dbReference type="PANTHER" id="PTHR12713">
    <property type="entry name" value="VACUOLAR ATP SYNTHASE SUBUNIT G"/>
    <property type="match status" value="1"/>
</dbReference>
<dbReference type="Pfam" id="PF03179">
    <property type="entry name" value="V-ATPase_G"/>
    <property type="match status" value="1"/>
</dbReference>
<feature type="chain" id="PRO_0000364226" description="V-type proton ATPase subunit G 3">
    <location>
        <begin position="1"/>
        <end position="118"/>
    </location>
</feature>
<feature type="region of interest" description="Disordered" evidence="3">
    <location>
        <begin position="1"/>
        <end position="37"/>
    </location>
</feature>
<feature type="coiled-coil region" evidence="2">
    <location>
        <begin position="3"/>
        <end position="53"/>
    </location>
</feature>
<feature type="compositionally biased region" description="Polar residues" evidence="3">
    <location>
        <begin position="1"/>
        <end position="12"/>
    </location>
</feature>
<feature type="compositionally biased region" description="Basic and acidic residues" evidence="3">
    <location>
        <begin position="14"/>
        <end position="26"/>
    </location>
</feature>
<protein>
    <recommendedName>
        <fullName>V-type proton ATPase subunit G 3</fullName>
        <shortName>V-ATPase subunit G 3</shortName>
    </recommendedName>
</protein>